<evidence type="ECO:0000250" key="1"/>
<evidence type="ECO:0000255" key="2">
    <source>
        <dbReference type="PROSITE-ProRule" id="PRU00223"/>
    </source>
</evidence>
<evidence type="ECO:0000256" key="3">
    <source>
        <dbReference type="SAM" id="MobiDB-lite"/>
    </source>
</evidence>
<reference key="1">
    <citation type="submission" date="2001-08" db="EMBL/GenBank/DDBJ databases">
        <title>Arabidopsis thaliana transcription factor WRKY36.</title>
        <authorList>
            <person name="Ulker B."/>
            <person name="Kushnir S."/>
            <person name="Somssich I.E."/>
        </authorList>
    </citation>
    <scope>NUCLEOTIDE SEQUENCE [MRNA]</scope>
    <source>
        <strain>cv. Columbia</strain>
        <tissue>Flower</tissue>
    </source>
</reference>
<reference key="2">
    <citation type="journal article" date="2000" name="Nature">
        <title>Sequence and analysis of chromosome 1 of the plant Arabidopsis thaliana.</title>
        <authorList>
            <person name="Theologis A."/>
            <person name="Ecker J.R."/>
            <person name="Palm C.J."/>
            <person name="Federspiel N.A."/>
            <person name="Kaul S."/>
            <person name="White O."/>
            <person name="Alonso J."/>
            <person name="Altafi H."/>
            <person name="Araujo R."/>
            <person name="Bowman C.L."/>
            <person name="Brooks S.Y."/>
            <person name="Buehler E."/>
            <person name="Chan A."/>
            <person name="Chao Q."/>
            <person name="Chen H."/>
            <person name="Cheuk R.F."/>
            <person name="Chin C.W."/>
            <person name="Chung M.K."/>
            <person name="Conn L."/>
            <person name="Conway A.B."/>
            <person name="Conway A.R."/>
            <person name="Creasy T.H."/>
            <person name="Dewar K."/>
            <person name="Dunn P."/>
            <person name="Etgu P."/>
            <person name="Feldblyum T.V."/>
            <person name="Feng J.-D."/>
            <person name="Fong B."/>
            <person name="Fujii C.Y."/>
            <person name="Gill J.E."/>
            <person name="Goldsmith A.D."/>
            <person name="Haas B."/>
            <person name="Hansen N.F."/>
            <person name="Hughes B."/>
            <person name="Huizar L."/>
            <person name="Hunter J.L."/>
            <person name="Jenkins J."/>
            <person name="Johnson-Hopson C."/>
            <person name="Khan S."/>
            <person name="Khaykin E."/>
            <person name="Kim C.J."/>
            <person name="Koo H.L."/>
            <person name="Kremenetskaia I."/>
            <person name="Kurtz D.B."/>
            <person name="Kwan A."/>
            <person name="Lam B."/>
            <person name="Langin-Hooper S."/>
            <person name="Lee A."/>
            <person name="Lee J.M."/>
            <person name="Lenz C.A."/>
            <person name="Li J.H."/>
            <person name="Li Y.-P."/>
            <person name="Lin X."/>
            <person name="Liu S.X."/>
            <person name="Liu Z.A."/>
            <person name="Luros J.S."/>
            <person name="Maiti R."/>
            <person name="Marziali A."/>
            <person name="Militscher J."/>
            <person name="Miranda M."/>
            <person name="Nguyen M."/>
            <person name="Nierman W.C."/>
            <person name="Osborne B.I."/>
            <person name="Pai G."/>
            <person name="Peterson J."/>
            <person name="Pham P.K."/>
            <person name="Rizzo M."/>
            <person name="Rooney T."/>
            <person name="Rowley D."/>
            <person name="Sakano H."/>
            <person name="Salzberg S.L."/>
            <person name="Schwartz J.R."/>
            <person name="Shinn P."/>
            <person name="Southwick A.M."/>
            <person name="Sun H."/>
            <person name="Tallon L.J."/>
            <person name="Tambunga G."/>
            <person name="Toriumi M.J."/>
            <person name="Town C.D."/>
            <person name="Utterback T."/>
            <person name="Van Aken S."/>
            <person name="Vaysberg M."/>
            <person name="Vysotskaia V.S."/>
            <person name="Walker M."/>
            <person name="Wu D."/>
            <person name="Yu G."/>
            <person name="Fraser C.M."/>
            <person name="Venter J.C."/>
            <person name="Davis R.W."/>
        </authorList>
    </citation>
    <scope>NUCLEOTIDE SEQUENCE [LARGE SCALE GENOMIC DNA]</scope>
    <source>
        <strain>cv. Columbia</strain>
    </source>
</reference>
<reference key="3">
    <citation type="journal article" date="2017" name="Plant J.">
        <title>Araport11: a complete reannotation of the Arabidopsis thaliana reference genome.</title>
        <authorList>
            <person name="Cheng C.Y."/>
            <person name="Krishnakumar V."/>
            <person name="Chan A.P."/>
            <person name="Thibaud-Nissen F."/>
            <person name="Schobel S."/>
            <person name="Town C.D."/>
        </authorList>
    </citation>
    <scope>GENOME REANNOTATION</scope>
    <source>
        <strain>cv. Columbia</strain>
    </source>
</reference>
<accession>Q9CAR4</accession>
<gene>
    <name type="primary">WRKY36</name>
    <name type="ordered locus">At1g69810</name>
    <name type="ORF">T17F3.16</name>
</gene>
<feature type="chain" id="PRO_0000133678" description="Probable WRKY transcription factor 36">
    <location>
        <begin position="1"/>
        <end position="387"/>
    </location>
</feature>
<feature type="DNA-binding region" description="WRKY" evidence="2">
    <location>
        <begin position="197"/>
        <end position="264"/>
    </location>
</feature>
<feature type="region of interest" description="Disordered" evidence="3">
    <location>
        <begin position="322"/>
        <end position="366"/>
    </location>
</feature>
<feature type="compositionally biased region" description="Low complexity" evidence="3">
    <location>
        <begin position="329"/>
        <end position="346"/>
    </location>
</feature>
<name>WRK36_ARATH</name>
<sequence length="387" mass="43350">MIKEETVSYFQTFDGVMAESDKEEELDATKAKVEKVREENEKLKLLLSTILNNYNSLQMQVSKVLGQQQGASSMELDHIDRQDENNDYDVDISLRLGRSEQKISKKEENKVDKISTKNVEESKDKRSALGFGFQIQSYEASKLDDLCRQVKLANAENKCVSSRKDVKSVRNENHQDVLEEHEQTGLKKTRVCVKASCEDPSINDGCQWRKYGQKTAKTNPLPRAYYRCSMSSNCPVRKQVQRCGEEETSAFMTTYEGNHDHPLPMEASHMAAGTSAAASLLQSGSSSSSSSTSASLSYFFPFHHFSISTTNSHPTVTLDLTRPNYPNQLPDDYPLSSSSFSLNFSSPDPPPPSSHDHTLNFSGLRTQAPLSTDSLLARYRTRLSGQQ</sequence>
<proteinExistence type="evidence at protein level"/>
<keyword id="KW-0238">DNA-binding</keyword>
<keyword id="KW-0539">Nucleus</keyword>
<keyword id="KW-1185">Reference proteome</keyword>
<keyword id="KW-0804">Transcription</keyword>
<keyword id="KW-0805">Transcription regulation</keyword>
<protein>
    <recommendedName>
        <fullName>Probable WRKY transcription factor 36</fullName>
    </recommendedName>
    <alternativeName>
        <fullName>WRKY DNA-binding protein 36</fullName>
    </alternativeName>
</protein>
<dbReference type="EMBL" id="AF404859">
    <property type="protein sequence ID" value="AAK96197.1"/>
    <property type="molecule type" value="mRNA"/>
</dbReference>
<dbReference type="EMBL" id="AC010675">
    <property type="protein sequence ID" value="AAG52562.1"/>
    <property type="molecule type" value="Genomic_DNA"/>
</dbReference>
<dbReference type="EMBL" id="CP002684">
    <property type="protein sequence ID" value="AEE34978.1"/>
    <property type="molecule type" value="Genomic_DNA"/>
</dbReference>
<dbReference type="PIR" id="C96720">
    <property type="entry name" value="C96720"/>
</dbReference>
<dbReference type="RefSeq" id="NP_564976.1">
    <property type="nucleotide sequence ID" value="NM_105649.3"/>
</dbReference>
<dbReference type="SMR" id="Q9CAR4"/>
<dbReference type="BioGRID" id="28538">
    <property type="interactions" value="20"/>
</dbReference>
<dbReference type="FunCoup" id="Q9CAR4">
    <property type="interactions" value="10"/>
</dbReference>
<dbReference type="IntAct" id="Q9CAR4">
    <property type="interactions" value="10"/>
</dbReference>
<dbReference type="STRING" id="3702.Q9CAR4"/>
<dbReference type="iPTMnet" id="Q9CAR4"/>
<dbReference type="PaxDb" id="3702-AT1G69810.1"/>
<dbReference type="ProteomicsDB" id="234364"/>
<dbReference type="EnsemblPlants" id="AT1G69810.1">
    <property type="protein sequence ID" value="AT1G69810.1"/>
    <property type="gene ID" value="AT1G69810"/>
</dbReference>
<dbReference type="GeneID" id="843317"/>
<dbReference type="Gramene" id="AT1G69810.1">
    <property type="protein sequence ID" value="AT1G69810.1"/>
    <property type="gene ID" value="AT1G69810"/>
</dbReference>
<dbReference type="KEGG" id="ath:AT1G69810"/>
<dbReference type="Araport" id="AT1G69810"/>
<dbReference type="TAIR" id="AT1G69810">
    <property type="gene designation" value="WRKY36"/>
</dbReference>
<dbReference type="eggNOG" id="ENOG502QVE0">
    <property type="taxonomic scope" value="Eukaryota"/>
</dbReference>
<dbReference type="HOGENOM" id="CLU_748742_0_0_1"/>
<dbReference type="InParanoid" id="Q9CAR4"/>
<dbReference type="OMA" id="SEKKRWA"/>
<dbReference type="PhylomeDB" id="Q9CAR4"/>
<dbReference type="PRO" id="PR:Q9CAR4"/>
<dbReference type="Proteomes" id="UP000006548">
    <property type="component" value="Chromosome 1"/>
</dbReference>
<dbReference type="ExpressionAtlas" id="Q9CAR4">
    <property type="expression patterns" value="baseline and differential"/>
</dbReference>
<dbReference type="GO" id="GO:0005634">
    <property type="term" value="C:nucleus"/>
    <property type="evidence" value="ECO:0007669"/>
    <property type="project" value="UniProtKB-SubCell"/>
</dbReference>
<dbReference type="GO" id="GO:0003700">
    <property type="term" value="F:DNA-binding transcription factor activity"/>
    <property type="evidence" value="ECO:0000250"/>
    <property type="project" value="TAIR"/>
</dbReference>
<dbReference type="GO" id="GO:0043565">
    <property type="term" value="F:sequence-specific DNA binding"/>
    <property type="evidence" value="ECO:0007669"/>
    <property type="project" value="InterPro"/>
</dbReference>
<dbReference type="Gene3D" id="2.20.25.80">
    <property type="entry name" value="WRKY domain"/>
    <property type="match status" value="1"/>
</dbReference>
<dbReference type="InterPro" id="IPR003657">
    <property type="entry name" value="WRKY_dom"/>
</dbReference>
<dbReference type="InterPro" id="IPR036576">
    <property type="entry name" value="WRKY_dom_sf"/>
</dbReference>
<dbReference type="InterPro" id="IPR044810">
    <property type="entry name" value="WRKY_plant"/>
</dbReference>
<dbReference type="PANTHER" id="PTHR31429">
    <property type="entry name" value="WRKY TRANSCRIPTION FACTOR 36-RELATED"/>
    <property type="match status" value="1"/>
</dbReference>
<dbReference type="PANTHER" id="PTHR31429:SF97">
    <property type="entry name" value="WRKY TRANSCRIPTION FACTOR 36-RELATED"/>
    <property type="match status" value="1"/>
</dbReference>
<dbReference type="Pfam" id="PF03106">
    <property type="entry name" value="WRKY"/>
    <property type="match status" value="1"/>
</dbReference>
<dbReference type="SMART" id="SM00774">
    <property type="entry name" value="WRKY"/>
    <property type="match status" value="1"/>
</dbReference>
<dbReference type="SUPFAM" id="SSF118290">
    <property type="entry name" value="WRKY DNA-binding domain"/>
    <property type="match status" value="1"/>
</dbReference>
<dbReference type="PROSITE" id="PS50811">
    <property type="entry name" value="WRKY"/>
    <property type="match status" value="1"/>
</dbReference>
<organism>
    <name type="scientific">Arabidopsis thaliana</name>
    <name type="common">Mouse-ear cress</name>
    <dbReference type="NCBI Taxonomy" id="3702"/>
    <lineage>
        <taxon>Eukaryota</taxon>
        <taxon>Viridiplantae</taxon>
        <taxon>Streptophyta</taxon>
        <taxon>Embryophyta</taxon>
        <taxon>Tracheophyta</taxon>
        <taxon>Spermatophyta</taxon>
        <taxon>Magnoliopsida</taxon>
        <taxon>eudicotyledons</taxon>
        <taxon>Gunneridae</taxon>
        <taxon>Pentapetalae</taxon>
        <taxon>rosids</taxon>
        <taxon>malvids</taxon>
        <taxon>Brassicales</taxon>
        <taxon>Brassicaceae</taxon>
        <taxon>Camelineae</taxon>
        <taxon>Arabidopsis</taxon>
    </lineage>
</organism>
<comment type="function">
    <text evidence="1">Transcription factor. Interacts specifically with the W box (5'-(T)TGAC[CT]-3'), a frequently occurring elicitor-responsive cis-acting element (By similarity).</text>
</comment>
<comment type="interaction">
    <interactant intactId="EBI-15210240">
        <id>Q9CAR4</id>
    </interactant>
    <interactant intactId="EBI-4426649">
        <id>Q17TI5</id>
        <label>BRX</label>
    </interactant>
    <organismsDiffer>false</organismsDiffer>
    <experiments>3</experiments>
</comment>
<comment type="interaction">
    <interactant intactId="EBI-15210240">
        <id>Q9CAR4</id>
    </interactant>
    <interactant intactId="EBI-2112777">
        <id>Q9SK33</id>
        <label>WRKY60</label>
    </interactant>
    <organismsDiffer>false</organismsDiffer>
    <experiments>3</experiments>
</comment>
<comment type="subcellular location">
    <subcellularLocation>
        <location evidence="2">Nucleus</location>
    </subcellularLocation>
</comment>